<keyword id="KW-0025">Alternative splicing</keyword>
<keyword id="KW-0067">ATP-binding</keyword>
<keyword id="KW-0190">Covalent protein-DNA linkage</keyword>
<keyword id="KW-0235">DNA replication</keyword>
<keyword id="KW-0238">DNA-binding</keyword>
<keyword id="KW-0255">Endonuclease</keyword>
<keyword id="KW-0347">Helicase</keyword>
<keyword id="KW-1048">Host nucleus</keyword>
<keyword id="KW-0378">Hydrolase</keyword>
<keyword id="KW-0479">Metal-binding</keyword>
<keyword id="KW-0511">Multifunctional enzyme</keyword>
<keyword id="KW-0540">Nuclease</keyword>
<keyword id="KW-0547">Nucleotide-binding</keyword>
<keyword id="KW-0548">Nucleotidyltransferase</keyword>
<keyword id="KW-0678">Repressor</keyword>
<keyword id="KW-0808">Transferase</keyword>
<organismHost>
    <name type="scientific">Avena sativa</name>
    <name type="common">Oat</name>
    <dbReference type="NCBI Taxonomy" id="4498"/>
</organismHost>
<organismHost>
    <name type="scientific">Axonopus compressus</name>
    <dbReference type="NCBI Taxonomy" id="217170"/>
</organismHost>
<organismHost>
    <name type="scientific">Cenchrus americanus</name>
    <name type="common">Pearl millet</name>
    <name type="synonym">Pennisetum glaucum</name>
    <dbReference type="NCBI Taxonomy" id="4543"/>
</organismHost>
<organismHost>
    <name type="scientific">Cenchrus polystachios</name>
    <dbReference type="NCBI Taxonomy" id="281129"/>
</organismHost>
<organismHost>
    <name type="scientific">Coix lacryma-jobi</name>
    <name type="common">Job's tears</name>
    <dbReference type="NCBI Taxonomy" id="4505"/>
</organismHost>
<organismHost>
    <name type="scientific">Dactyloctenium aegyptium</name>
    <dbReference type="NCBI Taxonomy" id="270102"/>
</organismHost>
<organismHost>
    <name type="scientific">Digitaria</name>
    <dbReference type="NCBI Taxonomy" id="66017"/>
</organismHost>
<organismHost>
    <name type="scientific">Echinochloa colona</name>
    <dbReference type="NCBI Taxonomy" id="90396"/>
</organismHost>
<organismHost>
    <name type="scientific">Eleusine coracana</name>
    <name type="common">Indian finger millet</name>
    <name type="synonym">Ragi</name>
    <dbReference type="NCBI Taxonomy" id="4511"/>
</organismHost>
<organismHost>
    <name type="scientific">Eleusine indica</name>
    <name type="common">Goosegrass</name>
    <name type="synonym">Cynosurus indicus</name>
    <dbReference type="NCBI Taxonomy" id="29674"/>
</organismHost>
<organismHost>
    <name type="scientific">Hordeum vulgare</name>
    <name type="common">Barley</name>
    <dbReference type="NCBI Taxonomy" id="4513"/>
</organismHost>
<organismHost>
    <name type="scientific">Megathyrsus maximus</name>
    <dbReference type="NCBI Taxonomy" id="59788"/>
</organismHost>
<organismHost>
    <name type="scientific">Melinis repens</name>
    <name type="common">Red Natal grass</name>
    <name type="synonym">Rhynchelytrum repens</name>
    <dbReference type="NCBI Taxonomy" id="29709"/>
</organismHost>
<organismHost>
    <name type="scientific">Oryza glaberrima</name>
    <name type="common">African rice</name>
    <dbReference type="NCBI Taxonomy" id="4538"/>
</organismHost>
<organismHost>
    <name type="scientific">Oryza sativa</name>
    <name type="common">Rice</name>
    <dbReference type="NCBI Taxonomy" id="4530"/>
</organismHost>
<organismHost>
    <name type="scientific">Paspalum conjugatum</name>
    <name type="common">Hilo grass</name>
    <dbReference type="NCBI Taxonomy" id="158143"/>
</organismHost>
<organismHost>
    <name type="scientific">Paspalum notatum</name>
    <name type="common">Bahia grass</name>
    <dbReference type="NCBI Taxonomy" id="147272"/>
</organismHost>
<organismHost>
    <name type="scientific">Paspalum scrobiculatum</name>
    <dbReference type="NCBI Taxonomy" id="173849"/>
</organismHost>
<organismHost>
    <name type="scientific">Rottboellia cochinchinensis</name>
    <dbReference type="NCBI Taxonomy" id="300125"/>
</organismHost>
<organismHost>
    <name type="scientific">Saccharum officinarum</name>
    <name type="common">Sugarcane</name>
    <dbReference type="NCBI Taxonomy" id="4547"/>
</organismHost>
<organismHost>
    <name type="scientific">Setaria barbata</name>
    <dbReference type="NCBI Taxonomy" id="192628"/>
</organismHost>
<organismHost>
    <name type="scientific">Triticum aestivum</name>
    <name type="common">Wheat</name>
    <dbReference type="NCBI Taxonomy" id="4565"/>
</organismHost>
<organismHost>
    <name type="scientific">Urochloa deflexa</name>
    <dbReference type="NCBI Taxonomy" id="240436"/>
</organismHost>
<organismHost>
    <name type="scientific">Zea mays</name>
    <name type="common">Maize</name>
    <dbReference type="NCBI Taxonomy" id="4577"/>
</organismHost>
<gene>
    <name type="ORF">C1/C2</name>
</gene>
<comment type="function">
    <text evidence="1">Essential for the replication of viral ssDNA. The closed circular ssDNA genome is first converted to a superhelical dsDNA. Rep binds a specific region at the genome origin of replication. It introduces an endonucleolytic nick within the conserved sequence 5'-TAATATTAC-3' in the intergenic region of the genome present in all geminiviruses, thereby initiating the rolling circle replication (RCR). Following cleavage, binds covalently to the 5'-phosphate of DNA as a tyrosyl ester. The cleavage gives rise to a free 3'-OH that serves as a primer for the cellular DNA polymerase. The polymerase synthesizes the (+) strand DNA by rolling circle mechanism. After one round of replication, a Rep-catalyzed nucleotidyl transfer reaction releases a circular single-stranded virus genome, thereby terminating the replication. Displays origin-specific DNA cleavage, nucleotidyl transferase, ATPase and helicase activities. Acts as an inhibitor of C-sense gene transcription (By similarity).</text>
</comment>
<comment type="cofactor">
    <cofactor evidence="3">
        <name>Mg(2+)</name>
        <dbReference type="ChEBI" id="CHEBI:18420"/>
    </cofactor>
    <cofactor evidence="3">
        <name>Mn(2+)</name>
        <dbReference type="ChEBI" id="CHEBI:29035"/>
    </cofactor>
    <text evidence="3">Divalent metal cations, possibly Mg(2+) or Mn(2+).</text>
</comment>
<comment type="subunit">
    <text>Homooligomer. Rep binds to repeated DNA motifs (iterons). Forms the O-complex, which is a Rep-DNA complex involved in the initiation of RCR. Part of the C- and V-complexes which are RepA-Rep-DNA complexes involved in the c-sense and v-sense transcription.</text>
</comment>
<comment type="subcellular location">
    <subcellularLocation>
        <location evidence="1">Host nucleus</location>
    </subcellularLocation>
</comment>
<comment type="alternative products">
    <event type="alternative splicing"/>
    <isoform>
        <id>P14988-1</id>
        <name>Rep</name>
        <sequence type="displayed"/>
    </isoform>
    <isoform>
        <id>P03568-1</id>
        <name>RepA</name>
        <sequence type="external"/>
    </isoform>
</comment>
<comment type="domain">
    <text>There are 3 rolling circle replication (RCR) motifs. RCR-2 is probably involved in metal coordination. RCR-3 is required for phosphodiester bond cleavage for initiation of RCR.</text>
</comment>
<comment type="similarity">
    <text evidence="4">Belongs to the geminiviridae Rep protein family.</text>
</comment>
<comment type="sequence caution" evidence="4">
    <conflict type="erroneous gene model prediction">
        <sequence resource="EMBL-CDS" id="CAB37354"/>
    </conflict>
</comment>
<comment type="sequence caution" evidence="4">
    <conflict type="erroneous gene model prediction">
        <sequence resource="EMBL-CDS" id="CAB37355"/>
    </conflict>
</comment>
<proteinExistence type="inferred from homology"/>
<sequence length="360" mass="41932">MASSSSNRQFSHRNANTFLTYPKCPENPEIACQMIWELVVRWIPKYILCAREAHKDGSLHLHALLQTEKPVRISDSRFFDINGFHPNIQSAKSVNRVRDYILKEPLAVFERGTFIPRKSPFLGKSDSEVKEKKPSKDEIMRDIISHSTSKEEYLSMIQKELPFDWSTKLQYFEYSANKLFPEIQEEFTNPHPPSSPDLLCNESINDWLQPNIFQSSDERSRKQSLYIVGPTRTGKSTWARSLGVHNYWQNNVDWSSYNEDAIYNIVDDIPFKFCPCWKQLVGCQRDFIVNPKYGKKKKVQKKSKPTIILANSDEDWMKEMTPGQLEYFEANCIIYIMSPGEKWYSPPELPPTEAVHSDRS</sequence>
<name>REP_MSVK</name>
<accession>P14988</accession>
<organism>
    <name type="scientific">Maize streak virus genotype A (isolate Kenya)</name>
    <name type="common">MSV</name>
    <dbReference type="NCBI Taxonomy" id="10822"/>
    <lineage>
        <taxon>Viruses</taxon>
        <taxon>Monodnaviria</taxon>
        <taxon>Shotokuvirae</taxon>
        <taxon>Cressdnaviricota</taxon>
        <taxon>Repensiviricetes</taxon>
        <taxon>Geplafuvirales</taxon>
        <taxon>Geminiviridae</taxon>
        <taxon>Mastrevirus</taxon>
        <taxon>Maize streak virus</taxon>
    </lineage>
</organism>
<dbReference type="EC" id="2.7.7.-"/>
<dbReference type="EC" id="3.1.21.-"/>
<dbReference type="EMBL" id="X01089">
    <property type="protein sequence ID" value="CAB37354.1"/>
    <property type="status" value="ALT_SEQ"/>
    <property type="molecule type" value="Genomic_DNA"/>
</dbReference>
<dbReference type="EMBL" id="X01089">
    <property type="protein sequence ID" value="CAB37355.1"/>
    <property type="status" value="ALT_SEQ"/>
    <property type="molecule type" value="Genomic_DNA"/>
</dbReference>
<dbReference type="SMR" id="P14988"/>
<dbReference type="Proteomes" id="UP000008869">
    <property type="component" value="Genome"/>
</dbReference>
<dbReference type="GO" id="GO:0042025">
    <property type="term" value="C:host cell nucleus"/>
    <property type="evidence" value="ECO:0007669"/>
    <property type="project" value="UniProtKB-SubCell"/>
</dbReference>
<dbReference type="GO" id="GO:0005524">
    <property type="term" value="F:ATP binding"/>
    <property type="evidence" value="ECO:0007669"/>
    <property type="project" value="UniProtKB-KW"/>
</dbReference>
<dbReference type="GO" id="GO:0003677">
    <property type="term" value="F:DNA binding"/>
    <property type="evidence" value="ECO:0007669"/>
    <property type="project" value="UniProtKB-KW"/>
</dbReference>
<dbReference type="GO" id="GO:0016888">
    <property type="term" value="F:endodeoxyribonuclease activity, producing 5'-phosphomonoesters"/>
    <property type="evidence" value="ECO:0007669"/>
    <property type="project" value="InterPro"/>
</dbReference>
<dbReference type="GO" id="GO:0004386">
    <property type="term" value="F:helicase activity"/>
    <property type="evidence" value="ECO:0007669"/>
    <property type="project" value="UniProtKB-KW"/>
</dbReference>
<dbReference type="GO" id="GO:0046872">
    <property type="term" value="F:metal ion binding"/>
    <property type="evidence" value="ECO:0007669"/>
    <property type="project" value="UniProtKB-KW"/>
</dbReference>
<dbReference type="GO" id="GO:0016779">
    <property type="term" value="F:nucleotidyltransferase activity"/>
    <property type="evidence" value="ECO:0007669"/>
    <property type="project" value="UniProtKB-KW"/>
</dbReference>
<dbReference type="GO" id="GO:0005198">
    <property type="term" value="F:structural molecule activity"/>
    <property type="evidence" value="ECO:0007669"/>
    <property type="project" value="InterPro"/>
</dbReference>
<dbReference type="GO" id="GO:0006260">
    <property type="term" value="P:DNA replication"/>
    <property type="evidence" value="ECO:0007669"/>
    <property type="project" value="UniProtKB-KW"/>
</dbReference>
<dbReference type="Gene3D" id="3.40.1310.20">
    <property type="match status" value="1"/>
</dbReference>
<dbReference type="InterPro" id="IPR049912">
    <property type="entry name" value="CRESS_DNA_REP"/>
</dbReference>
<dbReference type="InterPro" id="IPR001146">
    <property type="entry name" value="Gemini_AL1_MSV"/>
</dbReference>
<dbReference type="InterPro" id="IPR001191">
    <property type="entry name" value="Gemini_AL1_REP"/>
</dbReference>
<dbReference type="InterPro" id="IPR022692">
    <property type="entry name" value="Gemini_AL1_REP_central"/>
</dbReference>
<dbReference type="InterPro" id="IPR027417">
    <property type="entry name" value="P-loop_NTPase"/>
</dbReference>
<dbReference type="Pfam" id="PF00799">
    <property type="entry name" value="Gemini_AL1"/>
    <property type="match status" value="1"/>
</dbReference>
<dbReference type="Pfam" id="PF08283">
    <property type="entry name" value="Gemini_AL1_M"/>
    <property type="match status" value="1"/>
</dbReference>
<dbReference type="PRINTS" id="PR00227">
    <property type="entry name" value="GEMCOATAL1"/>
</dbReference>
<dbReference type="PRINTS" id="PR00229">
    <property type="entry name" value="GEMCOATMSVL1"/>
</dbReference>
<dbReference type="SUPFAM" id="SSF55464">
    <property type="entry name" value="Origin of replication-binding domain, RBD-like"/>
    <property type="match status" value="1"/>
</dbReference>
<dbReference type="SUPFAM" id="SSF52540">
    <property type="entry name" value="P-loop containing nucleoside triphosphate hydrolases"/>
    <property type="match status" value="1"/>
</dbReference>
<dbReference type="PROSITE" id="PS52020">
    <property type="entry name" value="CRESS_DNA_REP"/>
    <property type="match status" value="1"/>
</dbReference>
<protein>
    <recommendedName>
        <fullName>Replication-associated protein</fullName>
        <shortName>Rep</shortName>
        <ecNumber>2.7.7.-</ecNumber>
        <ecNumber>3.1.21.-</ecNumber>
    </recommendedName>
</protein>
<reference key="1">
    <citation type="journal article" date="1984" name="Nucleic Acids Res.">
        <title>Physical structure and genetic organisation of the genome of maize streak virus (Kenyan isolate).</title>
        <authorList>
            <person name="Howell S.H."/>
        </authorList>
    </citation>
    <scope>NUCLEOTIDE SEQUENCE [GENOMIC DNA]</scope>
</reference>
<evidence type="ECO:0000250" key="1"/>
<evidence type="ECO:0000255" key="2"/>
<evidence type="ECO:0000255" key="3">
    <source>
        <dbReference type="PROSITE-ProRule" id="PRU01364"/>
    </source>
</evidence>
<evidence type="ECO:0000305" key="4"/>
<feature type="chain" id="PRO_0000222290" description="Replication-associated protein">
    <location>
        <begin position="1"/>
        <end position="360"/>
    </location>
</feature>
<feature type="domain" description="CRESS-DNA virus Rep endonuclease" evidence="3">
    <location>
        <begin position="11"/>
        <end position="114"/>
    </location>
</feature>
<feature type="region of interest" description="Oligomerization" evidence="1">
    <location>
        <begin position="175"/>
        <end position="187"/>
    </location>
</feature>
<feature type="region of interest" description="Transactivation" evidence="1">
    <location>
        <begin position="252"/>
        <end position="270"/>
    </location>
</feature>
<feature type="short sequence motif" description="RCR-1" evidence="3">
    <location>
        <begin position="18"/>
        <end position="21"/>
    </location>
</feature>
<feature type="short sequence motif" description="RCR-2" evidence="3">
    <location>
        <begin position="60"/>
        <end position="62"/>
    </location>
</feature>
<feature type="short sequence motif" description="RCR-3" evidence="3">
    <location>
        <begin position="100"/>
        <end position="103"/>
    </location>
</feature>
<feature type="short sequence motif" description="Nuclear localization signal" evidence="2">
    <location>
        <begin position="292"/>
        <end position="303"/>
    </location>
</feature>
<feature type="active site" description="For DNA cleavage activity" evidence="3">
    <location>
        <position position="100"/>
    </location>
</feature>
<feature type="binding site" evidence="3">
    <location>
        <position position="52"/>
    </location>
    <ligand>
        <name>a divalent metal cation</name>
        <dbReference type="ChEBI" id="CHEBI:60240"/>
    </ligand>
</feature>
<feature type="binding site" evidence="3">
    <location>
        <position position="60"/>
    </location>
    <ligand>
        <name>a divalent metal cation</name>
        <dbReference type="ChEBI" id="CHEBI:60240"/>
    </ligand>
</feature>
<feature type="binding site" evidence="3">
    <location>
        <position position="62"/>
    </location>
    <ligand>
        <name>a divalent metal cation</name>
        <dbReference type="ChEBI" id="CHEBI:60240"/>
    </ligand>
</feature>
<feature type="binding site" evidence="3">
    <location>
        <position position="104"/>
    </location>
    <ligand>
        <name>a divalent metal cation</name>
        <dbReference type="ChEBI" id="CHEBI:60240"/>
    </ligand>
</feature>
<feature type="binding site" evidence="2">
    <location>
        <begin position="229"/>
        <end position="236"/>
    </location>
    <ligand>
        <name>ATP</name>
        <dbReference type="ChEBI" id="CHEBI:30616"/>
    </ligand>
</feature>